<evidence type="ECO:0000255" key="1">
    <source>
        <dbReference type="HAMAP-Rule" id="MF_01341"/>
    </source>
</evidence>
<evidence type="ECO:0000256" key="2">
    <source>
        <dbReference type="SAM" id="MobiDB-lite"/>
    </source>
</evidence>
<evidence type="ECO:0000305" key="3"/>
<accession>Q2RQX9</accession>
<reference key="1">
    <citation type="journal article" date="2011" name="Stand. Genomic Sci.">
        <title>Complete genome sequence of Rhodospirillum rubrum type strain (S1).</title>
        <authorList>
            <person name="Munk A.C."/>
            <person name="Copeland A."/>
            <person name="Lucas S."/>
            <person name="Lapidus A."/>
            <person name="Del Rio T.G."/>
            <person name="Barry K."/>
            <person name="Detter J.C."/>
            <person name="Hammon N."/>
            <person name="Israni S."/>
            <person name="Pitluck S."/>
            <person name="Brettin T."/>
            <person name="Bruce D."/>
            <person name="Han C."/>
            <person name="Tapia R."/>
            <person name="Gilna P."/>
            <person name="Schmutz J."/>
            <person name="Larimer F."/>
            <person name="Land M."/>
            <person name="Kyrpides N.C."/>
            <person name="Mavromatis K."/>
            <person name="Richardson P."/>
            <person name="Rohde M."/>
            <person name="Goeker M."/>
            <person name="Klenk H.P."/>
            <person name="Zhang Y."/>
            <person name="Roberts G.P."/>
            <person name="Reslewic S."/>
            <person name="Schwartz D.C."/>
        </authorList>
    </citation>
    <scope>NUCLEOTIDE SEQUENCE [LARGE SCALE GENOMIC DNA]</scope>
    <source>
        <strain>ATCC 11170 / ATH 1.1.1 / DSM 467 / LMG 4362 / NCIMB 8255 / S1</strain>
    </source>
</reference>
<name>RL15_RHORT</name>
<proteinExistence type="inferred from homology"/>
<dbReference type="EMBL" id="CP000230">
    <property type="protein sequence ID" value="ABC23466.1"/>
    <property type="molecule type" value="Genomic_DNA"/>
</dbReference>
<dbReference type="RefSeq" id="WP_011390419.1">
    <property type="nucleotide sequence ID" value="NC_007643.1"/>
</dbReference>
<dbReference type="RefSeq" id="YP_427753.1">
    <property type="nucleotide sequence ID" value="NC_007643.1"/>
</dbReference>
<dbReference type="SMR" id="Q2RQX9"/>
<dbReference type="STRING" id="269796.Rru_A2669"/>
<dbReference type="EnsemblBacteria" id="ABC23466">
    <property type="protein sequence ID" value="ABC23466"/>
    <property type="gene ID" value="Rru_A2669"/>
</dbReference>
<dbReference type="KEGG" id="rru:Rru_A2669"/>
<dbReference type="PATRIC" id="fig|269796.9.peg.2776"/>
<dbReference type="eggNOG" id="COG0200">
    <property type="taxonomic scope" value="Bacteria"/>
</dbReference>
<dbReference type="HOGENOM" id="CLU_055188_4_0_5"/>
<dbReference type="PhylomeDB" id="Q2RQX9"/>
<dbReference type="Proteomes" id="UP000001929">
    <property type="component" value="Chromosome"/>
</dbReference>
<dbReference type="GO" id="GO:0022625">
    <property type="term" value="C:cytosolic large ribosomal subunit"/>
    <property type="evidence" value="ECO:0007669"/>
    <property type="project" value="TreeGrafter"/>
</dbReference>
<dbReference type="GO" id="GO:0019843">
    <property type="term" value="F:rRNA binding"/>
    <property type="evidence" value="ECO:0007669"/>
    <property type="project" value="UniProtKB-UniRule"/>
</dbReference>
<dbReference type="GO" id="GO:0003735">
    <property type="term" value="F:structural constituent of ribosome"/>
    <property type="evidence" value="ECO:0007669"/>
    <property type="project" value="InterPro"/>
</dbReference>
<dbReference type="GO" id="GO:0006412">
    <property type="term" value="P:translation"/>
    <property type="evidence" value="ECO:0007669"/>
    <property type="project" value="UniProtKB-UniRule"/>
</dbReference>
<dbReference type="Gene3D" id="3.100.10.10">
    <property type="match status" value="1"/>
</dbReference>
<dbReference type="HAMAP" id="MF_01341">
    <property type="entry name" value="Ribosomal_uL15"/>
    <property type="match status" value="1"/>
</dbReference>
<dbReference type="InterPro" id="IPR030878">
    <property type="entry name" value="Ribosomal_uL15"/>
</dbReference>
<dbReference type="InterPro" id="IPR021131">
    <property type="entry name" value="Ribosomal_uL15/eL18"/>
</dbReference>
<dbReference type="InterPro" id="IPR036227">
    <property type="entry name" value="Ribosomal_uL15/eL18_sf"/>
</dbReference>
<dbReference type="InterPro" id="IPR005749">
    <property type="entry name" value="Ribosomal_uL15_bac-type"/>
</dbReference>
<dbReference type="InterPro" id="IPR001196">
    <property type="entry name" value="Ribosomal_uL15_CS"/>
</dbReference>
<dbReference type="NCBIfam" id="TIGR01071">
    <property type="entry name" value="rplO_bact"/>
    <property type="match status" value="1"/>
</dbReference>
<dbReference type="PANTHER" id="PTHR12934">
    <property type="entry name" value="50S RIBOSOMAL PROTEIN L15"/>
    <property type="match status" value="1"/>
</dbReference>
<dbReference type="PANTHER" id="PTHR12934:SF11">
    <property type="entry name" value="LARGE RIBOSOMAL SUBUNIT PROTEIN UL15M"/>
    <property type="match status" value="1"/>
</dbReference>
<dbReference type="Pfam" id="PF00828">
    <property type="entry name" value="Ribosomal_L27A"/>
    <property type="match status" value="1"/>
</dbReference>
<dbReference type="SUPFAM" id="SSF52080">
    <property type="entry name" value="Ribosomal proteins L15p and L18e"/>
    <property type="match status" value="1"/>
</dbReference>
<dbReference type="PROSITE" id="PS00475">
    <property type="entry name" value="RIBOSOMAL_L15"/>
    <property type="match status" value="1"/>
</dbReference>
<protein>
    <recommendedName>
        <fullName evidence="1">Large ribosomal subunit protein uL15</fullName>
    </recommendedName>
    <alternativeName>
        <fullName evidence="3">50S ribosomal protein L15</fullName>
    </alternativeName>
</protein>
<gene>
    <name evidence="1" type="primary">rplO</name>
    <name type="ordered locus">Rru_A2669</name>
</gene>
<sequence>MKLNELRDNPGATKNRIRVGRGIGSGKGKTAGRGVKGQKSREGVSINGFEGGQMPIYRRLPKRGFNNPTRKSFAVVNLDRIQKAIDAKKLDATAVITEKALIEAGLVRRSQDGVRLLGKGELSVKVAIEVAGASATAREGVEKAGGTLTVTGAAAEAAPAAV</sequence>
<keyword id="KW-1185">Reference proteome</keyword>
<keyword id="KW-0687">Ribonucleoprotein</keyword>
<keyword id="KW-0689">Ribosomal protein</keyword>
<keyword id="KW-0694">RNA-binding</keyword>
<keyword id="KW-0699">rRNA-binding</keyword>
<feature type="chain" id="PRO_0000251554" description="Large ribosomal subunit protein uL15">
    <location>
        <begin position="1"/>
        <end position="162"/>
    </location>
</feature>
<feature type="region of interest" description="Disordered" evidence="2">
    <location>
        <begin position="1"/>
        <end position="44"/>
    </location>
</feature>
<feature type="compositionally biased region" description="Gly residues" evidence="2">
    <location>
        <begin position="21"/>
        <end position="35"/>
    </location>
</feature>
<comment type="function">
    <text evidence="1">Binds to the 23S rRNA.</text>
</comment>
<comment type="subunit">
    <text evidence="1">Part of the 50S ribosomal subunit.</text>
</comment>
<comment type="similarity">
    <text evidence="1">Belongs to the universal ribosomal protein uL15 family.</text>
</comment>
<organism>
    <name type="scientific">Rhodospirillum rubrum (strain ATCC 11170 / ATH 1.1.1 / DSM 467 / LMG 4362 / NCIMB 8255 / S1)</name>
    <dbReference type="NCBI Taxonomy" id="269796"/>
    <lineage>
        <taxon>Bacteria</taxon>
        <taxon>Pseudomonadati</taxon>
        <taxon>Pseudomonadota</taxon>
        <taxon>Alphaproteobacteria</taxon>
        <taxon>Rhodospirillales</taxon>
        <taxon>Rhodospirillaceae</taxon>
        <taxon>Rhodospirillum</taxon>
    </lineage>
</organism>